<name>PURA_METNO</name>
<feature type="chain" id="PRO_1000194765" description="Adenylosuccinate synthetase">
    <location>
        <begin position="1"/>
        <end position="430"/>
    </location>
</feature>
<feature type="active site" description="Proton acceptor" evidence="1">
    <location>
        <position position="13"/>
    </location>
</feature>
<feature type="active site" description="Proton donor" evidence="1">
    <location>
        <position position="41"/>
    </location>
</feature>
<feature type="binding site" evidence="1">
    <location>
        <begin position="12"/>
        <end position="18"/>
    </location>
    <ligand>
        <name>GTP</name>
        <dbReference type="ChEBI" id="CHEBI:37565"/>
    </ligand>
</feature>
<feature type="binding site" description="in other chain" evidence="1">
    <location>
        <begin position="13"/>
        <end position="16"/>
    </location>
    <ligand>
        <name>IMP</name>
        <dbReference type="ChEBI" id="CHEBI:58053"/>
        <note>ligand shared between dimeric partners</note>
    </ligand>
</feature>
<feature type="binding site" evidence="1">
    <location>
        <position position="13"/>
    </location>
    <ligand>
        <name>Mg(2+)</name>
        <dbReference type="ChEBI" id="CHEBI:18420"/>
    </ligand>
</feature>
<feature type="binding site" description="in other chain" evidence="1">
    <location>
        <begin position="38"/>
        <end position="41"/>
    </location>
    <ligand>
        <name>IMP</name>
        <dbReference type="ChEBI" id="CHEBI:58053"/>
        <note>ligand shared between dimeric partners</note>
    </ligand>
</feature>
<feature type="binding site" evidence="1">
    <location>
        <begin position="40"/>
        <end position="42"/>
    </location>
    <ligand>
        <name>GTP</name>
        <dbReference type="ChEBI" id="CHEBI:37565"/>
    </ligand>
</feature>
<feature type="binding site" evidence="1">
    <location>
        <position position="40"/>
    </location>
    <ligand>
        <name>Mg(2+)</name>
        <dbReference type="ChEBI" id="CHEBI:18420"/>
    </ligand>
</feature>
<feature type="binding site" description="in other chain" evidence="1">
    <location>
        <position position="130"/>
    </location>
    <ligand>
        <name>IMP</name>
        <dbReference type="ChEBI" id="CHEBI:58053"/>
        <note>ligand shared between dimeric partners</note>
    </ligand>
</feature>
<feature type="binding site" evidence="1">
    <location>
        <position position="144"/>
    </location>
    <ligand>
        <name>IMP</name>
        <dbReference type="ChEBI" id="CHEBI:58053"/>
        <note>ligand shared between dimeric partners</note>
    </ligand>
</feature>
<feature type="binding site" description="in other chain" evidence="1">
    <location>
        <position position="224"/>
    </location>
    <ligand>
        <name>IMP</name>
        <dbReference type="ChEBI" id="CHEBI:58053"/>
        <note>ligand shared between dimeric partners</note>
    </ligand>
</feature>
<feature type="binding site" description="in other chain" evidence="1">
    <location>
        <position position="239"/>
    </location>
    <ligand>
        <name>IMP</name>
        <dbReference type="ChEBI" id="CHEBI:58053"/>
        <note>ligand shared between dimeric partners</note>
    </ligand>
</feature>
<feature type="binding site" evidence="1">
    <location>
        <begin position="299"/>
        <end position="305"/>
    </location>
    <ligand>
        <name>substrate</name>
    </ligand>
</feature>
<feature type="binding site" description="in other chain" evidence="1">
    <location>
        <position position="303"/>
    </location>
    <ligand>
        <name>IMP</name>
        <dbReference type="ChEBI" id="CHEBI:58053"/>
        <note>ligand shared between dimeric partners</note>
    </ligand>
</feature>
<feature type="binding site" evidence="1">
    <location>
        <position position="305"/>
    </location>
    <ligand>
        <name>GTP</name>
        <dbReference type="ChEBI" id="CHEBI:37565"/>
    </ligand>
</feature>
<feature type="binding site" evidence="1">
    <location>
        <begin position="331"/>
        <end position="333"/>
    </location>
    <ligand>
        <name>GTP</name>
        <dbReference type="ChEBI" id="CHEBI:37565"/>
    </ligand>
</feature>
<feature type="binding site" evidence="1">
    <location>
        <begin position="413"/>
        <end position="415"/>
    </location>
    <ligand>
        <name>GTP</name>
        <dbReference type="ChEBI" id="CHEBI:37565"/>
    </ligand>
</feature>
<proteinExistence type="inferred from homology"/>
<protein>
    <recommendedName>
        <fullName evidence="1">Adenylosuccinate synthetase</fullName>
        <shortName evidence="1">AMPSase</shortName>
        <shortName evidence="1">AdSS</shortName>
        <ecNumber evidence="1">6.3.4.4</ecNumber>
    </recommendedName>
    <alternativeName>
        <fullName evidence="1">IMP--aspartate ligase</fullName>
    </alternativeName>
</protein>
<evidence type="ECO:0000255" key="1">
    <source>
        <dbReference type="HAMAP-Rule" id="MF_00011"/>
    </source>
</evidence>
<keyword id="KW-0963">Cytoplasm</keyword>
<keyword id="KW-0342">GTP-binding</keyword>
<keyword id="KW-0436">Ligase</keyword>
<keyword id="KW-0460">Magnesium</keyword>
<keyword id="KW-0479">Metal-binding</keyword>
<keyword id="KW-0547">Nucleotide-binding</keyword>
<keyword id="KW-0658">Purine biosynthesis</keyword>
<keyword id="KW-1185">Reference proteome</keyword>
<accession>B8IPM5</accession>
<comment type="function">
    <text evidence="1">Plays an important role in the de novo pathway of purine nucleotide biosynthesis. Catalyzes the first committed step in the biosynthesis of AMP from IMP.</text>
</comment>
<comment type="catalytic activity">
    <reaction evidence="1">
        <text>IMP + L-aspartate + GTP = N(6)-(1,2-dicarboxyethyl)-AMP + GDP + phosphate + 2 H(+)</text>
        <dbReference type="Rhea" id="RHEA:15753"/>
        <dbReference type="ChEBI" id="CHEBI:15378"/>
        <dbReference type="ChEBI" id="CHEBI:29991"/>
        <dbReference type="ChEBI" id="CHEBI:37565"/>
        <dbReference type="ChEBI" id="CHEBI:43474"/>
        <dbReference type="ChEBI" id="CHEBI:57567"/>
        <dbReference type="ChEBI" id="CHEBI:58053"/>
        <dbReference type="ChEBI" id="CHEBI:58189"/>
        <dbReference type="EC" id="6.3.4.4"/>
    </reaction>
</comment>
<comment type="cofactor">
    <cofactor evidence="1">
        <name>Mg(2+)</name>
        <dbReference type="ChEBI" id="CHEBI:18420"/>
    </cofactor>
    <text evidence="1">Binds 1 Mg(2+) ion per subunit.</text>
</comment>
<comment type="pathway">
    <text evidence="1">Purine metabolism; AMP biosynthesis via de novo pathway; AMP from IMP: step 1/2.</text>
</comment>
<comment type="subunit">
    <text evidence="1">Homodimer.</text>
</comment>
<comment type="subcellular location">
    <subcellularLocation>
        <location evidence="1">Cytoplasm</location>
    </subcellularLocation>
</comment>
<comment type="similarity">
    <text evidence="1">Belongs to the adenylosuccinate synthetase family.</text>
</comment>
<sequence length="430" mass="46376">MANVVVVGAQWGDEGKGKIVDWLAEQADVVVRFQGGHNAGHTLVIDGTTYKLSLLPSGVVRGGTLSVIGNGVVVDPWHLVDEIARLGQQGVTITPETLRIADNATLILPLHRELDHFRETANATLRIGTTKRGIGPAYEDKVGRRAIRVVDLADADLLGAKIERLLAHHNALRRGLGIEEVDGAALKTELLAIAPRILPFADTVWALLDEARRAGRRILFEGAQGALLDVDHGTYPYVTSSNIVAAQAATGSGLGPSAIGYVLGIVKAYTTRVGEGPFPTELTDAIGEKIGERGREFGVVTGRKRRCGWFDAALVRQTVRTSGIDGIALTKLDILDGFETIKICTGYRLDGRIIDHLPASQADQARVEPVYETIDGWFETTAGARSWAELPAQAIKYVRRIEELIGATVALLSTSPERDDTILVHNPFED</sequence>
<reference key="1">
    <citation type="submission" date="2009-01" db="EMBL/GenBank/DDBJ databases">
        <title>Complete sequence of chromosome of Methylobacterium nodulans ORS 2060.</title>
        <authorList>
            <consortium name="US DOE Joint Genome Institute"/>
            <person name="Lucas S."/>
            <person name="Copeland A."/>
            <person name="Lapidus A."/>
            <person name="Glavina del Rio T."/>
            <person name="Dalin E."/>
            <person name="Tice H."/>
            <person name="Bruce D."/>
            <person name="Goodwin L."/>
            <person name="Pitluck S."/>
            <person name="Sims D."/>
            <person name="Brettin T."/>
            <person name="Detter J.C."/>
            <person name="Han C."/>
            <person name="Larimer F."/>
            <person name="Land M."/>
            <person name="Hauser L."/>
            <person name="Kyrpides N."/>
            <person name="Ivanova N."/>
            <person name="Marx C.J."/>
            <person name="Richardson P."/>
        </authorList>
    </citation>
    <scope>NUCLEOTIDE SEQUENCE [LARGE SCALE GENOMIC DNA]</scope>
    <source>
        <strain>LMG 21967 / CNCM I-2342 / ORS 2060</strain>
    </source>
</reference>
<gene>
    <name evidence="1" type="primary">purA</name>
    <name type="ordered locus">Mnod_7581</name>
</gene>
<organism>
    <name type="scientific">Methylobacterium nodulans (strain LMG 21967 / CNCM I-2342 / ORS 2060)</name>
    <dbReference type="NCBI Taxonomy" id="460265"/>
    <lineage>
        <taxon>Bacteria</taxon>
        <taxon>Pseudomonadati</taxon>
        <taxon>Pseudomonadota</taxon>
        <taxon>Alphaproteobacteria</taxon>
        <taxon>Hyphomicrobiales</taxon>
        <taxon>Methylobacteriaceae</taxon>
        <taxon>Methylobacterium</taxon>
    </lineage>
</organism>
<dbReference type="EC" id="6.3.4.4" evidence="1"/>
<dbReference type="EMBL" id="CP001349">
    <property type="protein sequence ID" value="ACL62317.1"/>
    <property type="molecule type" value="Genomic_DNA"/>
</dbReference>
<dbReference type="RefSeq" id="WP_015933871.1">
    <property type="nucleotide sequence ID" value="NC_011894.1"/>
</dbReference>
<dbReference type="SMR" id="B8IPM5"/>
<dbReference type="STRING" id="460265.Mnod_7581"/>
<dbReference type="KEGG" id="mno:Mnod_7581"/>
<dbReference type="eggNOG" id="COG0104">
    <property type="taxonomic scope" value="Bacteria"/>
</dbReference>
<dbReference type="HOGENOM" id="CLU_029848_0_0_5"/>
<dbReference type="OrthoDB" id="9807553at2"/>
<dbReference type="UniPathway" id="UPA00075">
    <property type="reaction ID" value="UER00335"/>
</dbReference>
<dbReference type="Proteomes" id="UP000008207">
    <property type="component" value="Chromosome"/>
</dbReference>
<dbReference type="GO" id="GO:0005737">
    <property type="term" value="C:cytoplasm"/>
    <property type="evidence" value="ECO:0007669"/>
    <property type="project" value="UniProtKB-SubCell"/>
</dbReference>
<dbReference type="GO" id="GO:0004019">
    <property type="term" value="F:adenylosuccinate synthase activity"/>
    <property type="evidence" value="ECO:0007669"/>
    <property type="project" value="UniProtKB-UniRule"/>
</dbReference>
<dbReference type="GO" id="GO:0005525">
    <property type="term" value="F:GTP binding"/>
    <property type="evidence" value="ECO:0007669"/>
    <property type="project" value="UniProtKB-UniRule"/>
</dbReference>
<dbReference type="GO" id="GO:0000287">
    <property type="term" value="F:magnesium ion binding"/>
    <property type="evidence" value="ECO:0007669"/>
    <property type="project" value="UniProtKB-UniRule"/>
</dbReference>
<dbReference type="GO" id="GO:0044208">
    <property type="term" value="P:'de novo' AMP biosynthetic process"/>
    <property type="evidence" value="ECO:0007669"/>
    <property type="project" value="UniProtKB-UniRule"/>
</dbReference>
<dbReference type="GO" id="GO:0046040">
    <property type="term" value="P:IMP metabolic process"/>
    <property type="evidence" value="ECO:0007669"/>
    <property type="project" value="TreeGrafter"/>
</dbReference>
<dbReference type="CDD" id="cd03108">
    <property type="entry name" value="AdSS"/>
    <property type="match status" value="1"/>
</dbReference>
<dbReference type="FunFam" id="1.10.300.10:FF:000001">
    <property type="entry name" value="Adenylosuccinate synthetase"/>
    <property type="match status" value="1"/>
</dbReference>
<dbReference type="FunFam" id="3.90.170.10:FF:000001">
    <property type="entry name" value="Adenylosuccinate synthetase"/>
    <property type="match status" value="1"/>
</dbReference>
<dbReference type="Gene3D" id="3.40.440.10">
    <property type="entry name" value="Adenylosuccinate Synthetase, subunit A, domain 1"/>
    <property type="match status" value="1"/>
</dbReference>
<dbReference type="Gene3D" id="1.10.300.10">
    <property type="entry name" value="Adenylosuccinate Synthetase, subunit A, domain 2"/>
    <property type="match status" value="1"/>
</dbReference>
<dbReference type="Gene3D" id="3.90.170.10">
    <property type="entry name" value="Adenylosuccinate Synthetase, subunit A, domain 3"/>
    <property type="match status" value="1"/>
</dbReference>
<dbReference type="HAMAP" id="MF_00011">
    <property type="entry name" value="Adenylosucc_synth"/>
    <property type="match status" value="1"/>
</dbReference>
<dbReference type="InterPro" id="IPR018220">
    <property type="entry name" value="Adenylosuccin_syn_GTP-bd"/>
</dbReference>
<dbReference type="InterPro" id="IPR033128">
    <property type="entry name" value="Adenylosuccin_syn_Lys_AS"/>
</dbReference>
<dbReference type="InterPro" id="IPR042109">
    <property type="entry name" value="Adenylosuccinate_synth_dom1"/>
</dbReference>
<dbReference type="InterPro" id="IPR042110">
    <property type="entry name" value="Adenylosuccinate_synth_dom2"/>
</dbReference>
<dbReference type="InterPro" id="IPR042111">
    <property type="entry name" value="Adenylosuccinate_synth_dom3"/>
</dbReference>
<dbReference type="InterPro" id="IPR001114">
    <property type="entry name" value="Adenylosuccinate_synthetase"/>
</dbReference>
<dbReference type="InterPro" id="IPR027417">
    <property type="entry name" value="P-loop_NTPase"/>
</dbReference>
<dbReference type="NCBIfam" id="NF002223">
    <property type="entry name" value="PRK01117.1"/>
    <property type="match status" value="1"/>
</dbReference>
<dbReference type="NCBIfam" id="TIGR00184">
    <property type="entry name" value="purA"/>
    <property type="match status" value="1"/>
</dbReference>
<dbReference type="PANTHER" id="PTHR11846">
    <property type="entry name" value="ADENYLOSUCCINATE SYNTHETASE"/>
    <property type="match status" value="1"/>
</dbReference>
<dbReference type="PANTHER" id="PTHR11846:SF0">
    <property type="entry name" value="ADENYLOSUCCINATE SYNTHETASE"/>
    <property type="match status" value="1"/>
</dbReference>
<dbReference type="Pfam" id="PF00709">
    <property type="entry name" value="Adenylsucc_synt"/>
    <property type="match status" value="1"/>
</dbReference>
<dbReference type="SMART" id="SM00788">
    <property type="entry name" value="Adenylsucc_synt"/>
    <property type="match status" value="1"/>
</dbReference>
<dbReference type="SUPFAM" id="SSF52540">
    <property type="entry name" value="P-loop containing nucleoside triphosphate hydrolases"/>
    <property type="match status" value="1"/>
</dbReference>
<dbReference type="PROSITE" id="PS01266">
    <property type="entry name" value="ADENYLOSUCCIN_SYN_1"/>
    <property type="match status" value="1"/>
</dbReference>
<dbReference type="PROSITE" id="PS00513">
    <property type="entry name" value="ADENYLOSUCCIN_SYN_2"/>
    <property type="match status" value="1"/>
</dbReference>